<proteinExistence type="inferred from homology"/>
<comment type="function">
    <text evidence="1">One of the components of the core complex of photosystem II (PSII). PSII is a light-driven water:plastoquinone oxidoreductase that uses light energy to abstract electrons from H(2)O, generating O(2) and a proton gradient subsequently used for ATP formation. It consists of a core antenna complex that captures photons, and an electron transfer chain that converts photonic excitation into a charge separation. This subunit is found at the monomer-monomer interface and is required for correct PSII assembly and/or dimerization.</text>
</comment>
<comment type="subunit">
    <text evidence="1">PSII is composed of 1 copy each of membrane proteins PsbA, PsbB, PsbC, PsbD, PsbE, PsbF, PsbH, PsbI, PsbJ, PsbK, PsbL, PsbM, PsbT, PsbX, PsbY, PsbZ, Psb30/Ycf12, at least 3 peripheral proteins of the oxygen-evolving complex and a large number of cofactors. It forms dimeric complexes.</text>
</comment>
<comment type="subcellular location">
    <subcellularLocation>
        <location evidence="1">Plastid</location>
        <location evidence="1">Chloroplast thylakoid membrane</location>
        <topology evidence="1">Single-pass membrane protein</topology>
    </subcellularLocation>
</comment>
<comment type="similarity">
    <text evidence="1">Belongs to the PsbL family.</text>
</comment>
<organism>
    <name type="scientific">Populus trichocarpa</name>
    <name type="common">Western balsam poplar</name>
    <name type="synonym">Populus balsamifera subsp. trichocarpa</name>
    <dbReference type="NCBI Taxonomy" id="3694"/>
    <lineage>
        <taxon>Eukaryota</taxon>
        <taxon>Viridiplantae</taxon>
        <taxon>Streptophyta</taxon>
        <taxon>Embryophyta</taxon>
        <taxon>Tracheophyta</taxon>
        <taxon>Spermatophyta</taxon>
        <taxon>Magnoliopsida</taxon>
        <taxon>eudicotyledons</taxon>
        <taxon>Gunneridae</taxon>
        <taxon>Pentapetalae</taxon>
        <taxon>rosids</taxon>
        <taxon>fabids</taxon>
        <taxon>Malpighiales</taxon>
        <taxon>Salicaceae</taxon>
        <taxon>Saliceae</taxon>
        <taxon>Populus</taxon>
    </lineage>
</organism>
<feature type="chain" id="PRO_0000306243" description="Photosystem II reaction center protein L">
    <location>
        <begin position="1"/>
        <end position="38"/>
    </location>
</feature>
<feature type="transmembrane region" description="Helical" evidence="1">
    <location>
        <begin position="17"/>
        <end position="37"/>
    </location>
</feature>
<name>PSBL_POPTR</name>
<reference key="1">
    <citation type="journal article" date="2006" name="Science">
        <title>The genome of black cottonwood, Populus trichocarpa (Torr. &amp; Gray).</title>
        <authorList>
            <person name="Tuskan G.A."/>
            <person name="Difazio S."/>
            <person name="Jansson S."/>
            <person name="Bohlmann J."/>
            <person name="Grigoriev I."/>
            <person name="Hellsten U."/>
            <person name="Putnam N."/>
            <person name="Ralph S."/>
            <person name="Rombauts S."/>
            <person name="Salamov A."/>
            <person name="Schein J."/>
            <person name="Sterck L."/>
            <person name="Aerts A."/>
            <person name="Bhalerao R.R."/>
            <person name="Bhalerao R.P."/>
            <person name="Blaudez D."/>
            <person name="Boerjan W."/>
            <person name="Brun A."/>
            <person name="Brunner A."/>
            <person name="Busov V."/>
            <person name="Campbell M."/>
            <person name="Carlson J."/>
            <person name="Chalot M."/>
            <person name="Chapman J."/>
            <person name="Chen G.-L."/>
            <person name="Cooper D."/>
            <person name="Coutinho P.M."/>
            <person name="Couturier J."/>
            <person name="Covert S."/>
            <person name="Cronk Q."/>
            <person name="Cunningham R."/>
            <person name="Davis J."/>
            <person name="Degroeve S."/>
            <person name="Dejardin A."/>
            <person name="dePamphilis C.W."/>
            <person name="Detter J."/>
            <person name="Dirks B."/>
            <person name="Dubchak I."/>
            <person name="Duplessis S."/>
            <person name="Ehlting J."/>
            <person name="Ellis B."/>
            <person name="Gendler K."/>
            <person name="Goodstein D."/>
            <person name="Gribskov M."/>
            <person name="Grimwood J."/>
            <person name="Groover A."/>
            <person name="Gunter L."/>
            <person name="Hamberger B."/>
            <person name="Heinze B."/>
            <person name="Helariutta Y."/>
            <person name="Henrissat B."/>
            <person name="Holligan D."/>
            <person name="Holt R."/>
            <person name="Huang W."/>
            <person name="Islam-Faridi N."/>
            <person name="Jones S."/>
            <person name="Jones-Rhoades M."/>
            <person name="Jorgensen R."/>
            <person name="Joshi C."/>
            <person name="Kangasjaervi J."/>
            <person name="Karlsson J."/>
            <person name="Kelleher C."/>
            <person name="Kirkpatrick R."/>
            <person name="Kirst M."/>
            <person name="Kohler A."/>
            <person name="Kalluri U."/>
            <person name="Larimer F."/>
            <person name="Leebens-Mack J."/>
            <person name="Leple J.-C."/>
            <person name="Locascio P."/>
            <person name="Lou Y."/>
            <person name="Lucas S."/>
            <person name="Martin F."/>
            <person name="Montanini B."/>
            <person name="Napoli C."/>
            <person name="Nelson D.R."/>
            <person name="Nelson C."/>
            <person name="Nieminen K."/>
            <person name="Nilsson O."/>
            <person name="Pereda V."/>
            <person name="Peter G."/>
            <person name="Philippe R."/>
            <person name="Pilate G."/>
            <person name="Poliakov A."/>
            <person name="Razumovskaya J."/>
            <person name="Richardson P."/>
            <person name="Rinaldi C."/>
            <person name="Ritland K."/>
            <person name="Rouze P."/>
            <person name="Ryaboy D."/>
            <person name="Schmutz J."/>
            <person name="Schrader J."/>
            <person name="Segerman B."/>
            <person name="Shin H."/>
            <person name="Siddiqui A."/>
            <person name="Sterky F."/>
            <person name="Terry A."/>
            <person name="Tsai C.-J."/>
            <person name="Uberbacher E."/>
            <person name="Unneberg P."/>
            <person name="Vahala J."/>
            <person name="Wall K."/>
            <person name="Wessler S."/>
            <person name="Yang G."/>
            <person name="Yin T."/>
            <person name="Douglas C."/>
            <person name="Marra M."/>
            <person name="Sandberg G."/>
            <person name="Van de Peer Y."/>
            <person name="Rokhsar D.S."/>
        </authorList>
    </citation>
    <scope>NUCLEOTIDE SEQUENCE [LARGE SCALE GENOMIC DNA]</scope>
    <source>
        <strain>cv. Nisqually</strain>
    </source>
</reference>
<evidence type="ECO:0000255" key="1">
    <source>
        <dbReference type="HAMAP-Rule" id="MF_01317"/>
    </source>
</evidence>
<keyword id="KW-0150">Chloroplast</keyword>
<keyword id="KW-0472">Membrane</keyword>
<keyword id="KW-0602">Photosynthesis</keyword>
<keyword id="KW-0604">Photosystem II</keyword>
<keyword id="KW-0934">Plastid</keyword>
<keyword id="KW-0674">Reaction center</keyword>
<keyword id="KW-1185">Reference proteome</keyword>
<keyword id="KW-0793">Thylakoid</keyword>
<keyword id="KW-0812">Transmembrane</keyword>
<keyword id="KW-1133">Transmembrane helix</keyword>
<geneLocation type="chloroplast"/>
<sequence>MTQSNPNEQNVELNRTSLYWGLLLIFVLAVLFSNYFFN</sequence>
<gene>
    <name evidence="1" type="primary">psbL</name>
    <name type="ordered locus">Poptr_cp038</name>
</gene>
<dbReference type="EMBL" id="EF489041">
    <property type="protein sequence ID" value="ABO36720.1"/>
    <property type="molecule type" value="Genomic_DNA"/>
</dbReference>
<dbReference type="RefSeq" id="YP_001109517.1">
    <property type="nucleotide sequence ID" value="NC_009143.1"/>
</dbReference>
<dbReference type="SMR" id="A4GYS6"/>
<dbReference type="FunCoup" id="A4GYS6">
    <property type="interactions" value="107"/>
</dbReference>
<dbReference type="STRING" id="3694.A4GYS6"/>
<dbReference type="EnsemblPlants" id="Potri.013G162100.1.v4.1">
    <property type="protein sequence ID" value="Potri.013G162100.1.v4.1"/>
    <property type="gene ID" value="Potri.013G162100.v4.1"/>
</dbReference>
<dbReference type="GeneID" id="4929685"/>
<dbReference type="Gramene" id="Potri.013G162100.1.v4.1">
    <property type="protein sequence ID" value="Potri.013G162100.1.v4.1"/>
    <property type="gene ID" value="Potri.013G162100.v4.1"/>
</dbReference>
<dbReference type="KEGG" id="pop:4929685"/>
<dbReference type="InParanoid" id="A4GYS6"/>
<dbReference type="OrthoDB" id="99at2759"/>
<dbReference type="Proteomes" id="UP000006729">
    <property type="component" value="Chloroplast"/>
</dbReference>
<dbReference type="GO" id="GO:0009535">
    <property type="term" value="C:chloroplast thylakoid membrane"/>
    <property type="evidence" value="ECO:0007669"/>
    <property type="project" value="UniProtKB-SubCell"/>
</dbReference>
<dbReference type="GO" id="GO:0009539">
    <property type="term" value="C:photosystem II reaction center"/>
    <property type="evidence" value="ECO:0007669"/>
    <property type="project" value="InterPro"/>
</dbReference>
<dbReference type="GO" id="GO:0015979">
    <property type="term" value="P:photosynthesis"/>
    <property type="evidence" value="ECO:0007669"/>
    <property type="project" value="UniProtKB-UniRule"/>
</dbReference>
<dbReference type="HAMAP" id="MF_01317">
    <property type="entry name" value="PSII_PsbL"/>
    <property type="match status" value="1"/>
</dbReference>
<dbReference type="InterPro" id="IPR003372">
    <property type="entry name" value="PSII_PsbL"/>
</dbReference>
<dbReference type="InterPro" id="IPR037266">
    <property type="entry name" value="PSII_PsbL_sf"/>
</dbReference>
<dbReference type="NCBIfam" id="NF001972">
    <property type="entry name" value="PRK00753.1"/>
    <property type="match status" value="1"/>
</dbReference>
<dbReference type="Pfam" id="PF02419">
    <property type="entry name" value="PsbL"/>
    <property type="match status" value="1"/>
</dbReference>
<dbReference type="SUPFAM" id="SSF161017">
    <property type="entry name" value="Photosystem II reaction center protein L, PsbL"/>
    <property type="match status" value="1"/>
</dbReference>
<protein>
    <recommendedName>
        <fullName evidence="1">Photosystem II reaction center protein L</fullName>
        <shortName evidence="1">PSII-L</shortName>
    </recommendedName>
</protein>
<accession>A4GYS6</accession>